<comment type="function">
    <text evidence="1">Catalyzes the oxidation of the 1,2-dihydro- and 1,6-dihydro- isomeric forms of beta-NAD(P) back to beta-NAD(P)+. Has a preference for 1,2-dihydro-beta-NAD as substrate. May serve to protect primary metabolism dehydrogenases from inhibition by the 1,2-dihydro- and 1,6-dihydro-beta-NAD(P) isomers.</text>
</comment>
<comment type="catalytic activity">
    <reaction evidence="1">
        <text>1,2-dihydro-beta-NAD + O2 + H(+) = H2O2 + NAD(+)</text>
        <dbReference type="Rhea" id="RHEA:40395"/>
        <dbReference type="ChEBI" id="CHEBI:15378"/>
        <dbReference type="ChEBI" id="CHEBI:15379"/>
        <dbReference type="ChEBI" id="CHEBI:16240"/>
        <dbReference type="ChEBI" id="CHEBI:57540"/>
        <dbReference type="ChEBI" id="CHEBI:88138"/>
        <dbReference type="EC" id="1.6.3.5"/>
    </reaction>
</comment>
<comment type="catalytic activity">
    <reaction evidence="1">
        <text>1,2-dihydro-beta-NADP + O2 + H(+) = H2O2 + NADP(+)</text>
        <dbReference type="Rhea" id="RHEA:40399"/>
        <dbReference type="ChEBI" id="CHEBI:15378"/>
        <dbReference type="ChEBI" id="CHEBI:15379"/>
        <dbReference type="ChEBI" id="CHEBI:16240"/>
        <dbReference type="ChEBI" id="CHEBI:58349"/>
        <dbReference type="ChEBI" id="CHEBI:88137"/>
        <dbReference type="EC" id="1.6.3.5"/>
    </reaction>
</comment>
<comment type="catalytic activity">
    <reaction evidence="1">
        <text>1,6-dihydro-beta-NADP + O2 + H(+) = H2O2 + NADP(+)</text>
        <dbReference type="Rhea" id="RHEA:48000"/>
        <dbReference type="ChEBI" id="CHEBI:15378"/>
        <dbReference type="ChEBI" id="CHEBI:15379"/>
        <dbReference type="ChEBI" id="CHEBI:16240"/>
        <dbReference type="ChEBI" id="CHEBI:58349"/>
        <dbReference type="ChEBI" id="CHEBI:88139"/>
        <dbReference type="EC" id="1.6.3.5"/>
    </reaction>
</comment>
<comment type="catalytic activity">
    <reaction evidence="1">
        <text>1,6-dihydro-beta-NAD + O2 + H(+) = H2O2 + NAD(+)</text>
        <dbReference type="Rhea" id="RHEA:47996"/>
        <dbReference type="ChEBI" id="CHEBI:15378"/>
        <dbReference type="ChEBI" id="CHEBI:15379"/>
        <dbReference type="ChEBI" id="CHEBI:16240"/>
        <dbReference type="ChEBI" id="CHEBI:57540"/>
        <dbReference type="ChEBI" id="CHEBI:88140"/>
        <dbReference type="EC" id="1.6.3.5"/>
    </reaction>
</comment>
<comment type="cofactor">
    <cofactor evidence="1">
        <name>FAD</name>
        <dbReference type="ChEBI" id="CHEBI:57692"/>
    </cofactor>
</comment>
<comment type="similarity">
    <text evidence="3">Belongs to the bacterial renalase family.</text>
</comment>
<gene>
    <name evidence="4" type="ordered locus">PSPTO_1126</name>
</gene>
<sequence length="328" mass="35840">MTVPIAIIGTGIAGLSAAQALTAAGHQVHLFDKSRGSGGRMSSKRSDAGALDMGAQYFTARDRRFATAVKQWQAQGHVAEWTPLLYNFHAGRLSPSPDEQVRWVGKPGMSAITRAMRGDMPVSFSCRITEVFRGEEHWNLLDAEGQNHGPFSHVIIATPAPQASTLLAAAPKLASVVAGVKMDPTWAVALAFETPLQTPMQGCFVQDSPLDWLARNRSKPERDDTLDTWILHATSQWSRQNLDASREQVIEHLHGAFAELIDCTMPAPVFSLAHRWLYARPAGAHEWGALSDADLGIYVCGDWCLSGRVEGAWLSGQEAARRLLEHLQ</sequence>
<organism>
    <name type="scientific">Pseudomonas syringae pv. tomato (strain ATCC BAA-871 / DC3000)</name>
    <dbReference type="NCBI Taxonomy" id="223283"/>
    <lineage>
        <taxon>Bacteria</taxon>
        <taxon>Pseudomonadati</taxon>
        <taxon>Pseudomonadota</taxon>
        <taxon>Gammaproteobacteria</taxon>
        <taxon>Pseudomonadales</taxon>
        <taxon>Pseudomonadaceae</taxon>
        <taxon>Pseudomonas</taxon>
    </lineage>
</organism>
<accession>Q888A4</accession>
<reference key="1">
    <citation type="journal article" date="2003" name="Proc. Natl. Acad. Sci. U.S.A.">
        <title>The complete genome sequence of the Arabidopsis and tomato pathogen Pseudomonas syringae pv. tomato DC3000.</title>
        <authorList>
            <person name="Buell C.R."/>
            <person name="Joardar V."/>
            <person name="Lindeberg M."/>
            <person name="Selengut J."/>
            <person name="Paulsen I.T."/>
            <person name="Gwinn M.L."/>
            <person name="Dodson R.J."/>
            <person name="DeBoy R.T."/>
            <person name="Durkin A.S."/>
            <person name="Kolonay J.F."/>
            <person name="Madupu R."/>
            <person name="Daugherty S.C."/>
            <person name="Brinkac L.M."/>
            <person name="Beanan M.J."/>
            <person name="Haft D.H."/>
            <person name="Nelson W.C."/>
            <person name="Davidsen T.M."/>
            <person name="Zafar N."/>
            <person name="Zhou L."/>
            <person name="Liu J."/>
            <person name="Yuan Q."/>
            <person name="Khouri H.M."/>
            <person name="Fedorova N.B."/>
            <person name="Tran B."/>
            <person name="Russell D."/>
            <person name="Berry K.J."/>
            <person name="Utterback T.R."/>
            <person name="Van Aken S.E."/>
            <person name="Feldblyum T.V."/>
            <person name="D'Ascenzo M."/>
            <person name="Deng W.-L."/>
            <person name="Ramos A.R."/>
            <person name="Alfano J.R."/>
            <person name="Cartinhour S."/>
            <person name="Chatterjee A.K."/>
            <person name="Delaney T.P."/>
            <person name="Lazarowitz S.G."/>
            <person name="Martin G.B."/>
            <person name="Schneider D.J."/>
            <person name="Tang X."/>
            <person name="Bender C.L."/>
            <person name="White O."/>
            <person name="Fraser C.M."/>
            <person name="Collmer A."/>
        </authorList>
    </citation>
    <scope>NUCLEOTIDE SEQUENCE [LARGE SCALE GENOMIC DNA]</scope>
    <source>
        <strain>ATCC BAA-871 / DC3000</strain>
    </source>
</reference>
<reference key="2">
    <citation type="submission" date="2009-11" db="PDB data bank">
        <title>X-ray structure of P. syringae Q888A4 oxidoreductase at resolution 2.5A, Northeast Structural Genomics Consortium target PsR10.</title>
        <authorList>
            <consortium name="Northeast structural genomics consortium (NESG)"/>
        </authorList>
    </citation>
    <scope>X-RAY CRYSTALLOGRAPHY (2.50 ANGSTROMS) IN COMPLEX WITH FAD</scope>
</reference>
<evidence type="ECO:0000250" key="1">
    <source>
        <dbReference type="UniProtKB" id="Q48MT7"/>
    </source>
</evidence>
<evidence type="ECO:0000269" key="2">
    <source ref="2"/>
</evidence>
<evidence type="ECO:0000305" key="3"/>
<evidence type="ECO:0000312" key="4">
    <source>
        <dbReference type="EMBL" id="AAO54655.1"/>
    </source>
</evidence>
<evidence type="ECO:0007744" key="5">
    <source>
        <dbReference type="PDB" id="3KKJ"/>
    </source>
</evidence>
<evidence type="ECO:0007829" key="6">
    <source>
        <dbReference type="PDB" id="3KKJ"/>
    </source>
</evidence>
<dbReference type="EC" id="1.6.3.5" evidence="1"/>
<dbReference type="EMBL" id="AE016853">
    <property type="protein sequence ID" value="AAO54655.1"/>
    <property type="molecule type" value="Genomic_DNA"/>
</dbReference>
<dbReference type="RefSeq" id="NP_790960.1">
    <property type="nucleotide sequence ID" value="NC_004578.1"/>
</dbReference>
<dbReference type="RefSeq" id="WP_005768828.1">
    <property type="nucleotide sequence ID" value="NC_004578.1"/>
</dbReference>
<dbReference type="PDB" id="3KKJ">
    <property type="method" value="X-ray"/>
    <property type="resolution" value="2.50 A"/>
    <property type="chains" value="A/B=1-328"/>
</dbReference>
<dbReference type="PDBsum" id="3KKJ"/>
<dbReference type="SMR" id="Q888A4"/>
<dbReference type="STRING" id="223283.PSPTO_1126"/>
<dbReference type="DrugBank" id="DB03147">
    <property type="generic name" value="Flavin adenine dinucleotide"/>
</dbReference>
<dbReference type="GeneID" id="1182762"/>
<dbReference type="KEGG" id="pst:PSPTO_1126"/>
<dbReference type="PATRIC" id="fig|223283.9.peg.1136"/>
<dbReference type="eggNOG" id="COG3380">
    <property type="taxonomic scope" value="Bacteria"/>
</dbReference>
<dbReference type="HOGENOM" id="CLU_036034_0_0_6"/>
<dbReference type="OrthoDB" id="5792777at2"/>
<dbReference type="PhylomeDB" id="Q888A4"/>
<dbReference type="EvolutionaryTrace" id="Q888A4"/>
<dbReference type="Proteomes" id="UP000002515">
    <property type="component" value="Chromosome"/>
</dbReference>
<dbReference type="GO" id="GO:0050660">
    <property type="term" value="F:flavin adenine dinucleotide binding"/>
    <property type="evidence" value="ECO:0007669"/>
    <property type="project" value="UniProtKB-UniRule"/>
</dbReference>
<dbReference type="GO" id="GO:0051287">
    <property type="term" value="F:NAD binding"/>
    <property type="evidence" value="ECO:0007669"/>
    <property type="project" value="UniProtKB-UniRule"/>
</dbReference>
<dbReference type="GO" id="GO:0050661">
    <property type="term" value="F:NADP binding"/>
    <property type="evidence" value="ECO:0007669"/>
    <property type="project" value="UniProtKB-UniRule"/>
</dbReference>
<dbReference type="GO" id="GO:0050664">
    <property type="term" value="F:oxidoreductase activity, acting on NAD(P)H, oxygen as acceptor"/>
    <property type="evidence" value="ECO:0007669"/>
    <property type="project" value="UniProtKB-UniRule"/>
</dbReference>
<dbReference type="Gene3D" id="3.90.660.10">
    <property type="match status" value="1"/>
</dbReference>
<dbReference type="Gene3D" id="3.50.50.60">
    <property type="entry name" value="FAD/NAD(P)-binding domain"/>
    <property type="match status" value="1"/>
</dbReference>
<dbReference type="HAMAP" id="MF_02074">
    <property type="entry name" value="Bact_renalase"/>
    <property type="match status" value="1"/>
</dbReference>
<dbReference type="InterPro" id="IPR002937">
    <property type="entry name" value="Amino_oxidase"/>
</dbReference>
<dbReference type="InterPro" id="IPR034721">
    <property type="entry name" value="Bac_renal"/>
</dbReference>
<dbReference type="InterPro" id="IPR036188">
    <property type="entry name" value="FAD/NAD-bd_sf"/>
</dbReference>
<dbReference type="PANTHER" id="PTHR16128">
    <property type="entry name" value="FAD/NAD(P)-BINDING OXIDOREDUCTASE FAMILY PROTEIN"/>
    <property type="match status" value="1"/>
</dbReference>
<dbReference type="PANTHER" id="PTHR16128:SF5">
    <property type="entry name" value="FAD_NAD(P)-BINDING OXIDOREDUCTASE FAMILY PROTEIN"/>
    <property type="match status" value="1"/>
</dbReference>
<dbReference type="Pfam" id="PF01593">
    <property type="entry name" value="Amino_oxidase"/>
    <property type="match status" value="1"/>
</dbReference>
<dbReference type="Pfam" id="PF13450">
    <property type="entry name" value="NAD_binding_8"/>
    <property type="match status" value="1"/>
</dbReference>
<dbReference type="PRINTS" id="PR00419">
    <property type="entry name" value="ADXRDTASE"/>
</dbReference>
<dbReference type="SUPFAM" id="SSF51905">
    <property type="entry name" value="FAD/NAD(P)-binding domain"/>
    <property type="match status" value="1"/>
</dbReference>
<protein>
    <recommendedName>
        <fullName evidence="1">Renalase</fullName>
        <ecNumber evidence="1">1.6.3.5</ecNumber>
    </recommendedName>
</protein>
<name>RNLS_PSESM</name>
<keyword id="KW-0002">3D-structure</keyword>
<keyword id="KW-0274">FAD</keyword>
<keyword id="KW-0285">Flavoprotein</keyword>
<keyword id="KW-0520">NAD</keyword>
<keyword id="KW-0521">NADP</keyword>
<keyword id="KW-0547">Nucleotide-binding</keyword>
<keyword id="KW-0560">Oxidoreductase</keyword>
<keyword id="KW-1185">Reference proteome</keyword>
<proteinExistence type="evidence at protein level"/>
<feature type="chain" id="PRO_0000437675" description="Renalase">
    <location>
        <begin position="1"/>
        <end position="328"/>
    </location>
</feature>
<feature type="binding site" evidence="2 5">
    <location>
        <position position="13"/>
    </location>
    <ligand>
        <name>FAD</name>
        <dbReference type="ChEBI" id="CHEBI:57692"/>
    </ligand>
</feature>
<feature type="binding site" evidence="2 5">
    <location>
        <begin position="32"/>
        <end position="33"/>
    </location>
    <ligand>
        <name>FAD</name>
        <dbReference type="ChEBI" id="CHEBI:57692"/>
    </ligand>
</feature>
<feature type="binding site" evidence="2 5">
    <location>
        <position position="40"/>
    </location>
    <ligand>
        <name>FAD</name>
        <dbReference type="ChEBI" id="CHEBI:57692"/>
    </ligand>
</feature>
<feature type="binding site" evidence="2 5">
    <location>
        <begin position="56"/>
        <end position="57"/>
    </location>
    <ligand>
        <name>FAD</name>
        <dbReference type="ChEBI" id="CHEBI:57692"/>
    </ligand>
</feature>
<feature type="binding site" evidence="1">
    <location>
        <begin position="57"/>
        <end position="61"/>
    </location>
    <ligand>
        <name>substrate</name>
    </ligand>
</feature>
<feature type="binding site" evidence="1">
    <location>
        <begin position="96"/>
        <end position="98"/>
    </location>
    <ligand>
        <name>substrate</name>
    </ligand>
</feature>
<feature type="binding site" evidence="2 5">
    <location>
        <position position="128"/>
    </location>
    <ligand>
        <name>FAD</name>
        <dbReference type="ChEBI" id="CHEBI:57692"/>
    </ligand>
</feature>
<feature type="binding site" evidence="1">
    <location>
        <position position="185"/>
    </location>
    <ligand>
        <name>substrate</name>
    </ligand>
</feature>
<feature type="binding site" evidence="2 5">
    <location>
        <position position="302"/>
    </location>
    <ligand>
        <name>FAD</name>
        <dbReference type="ChEBI" id="CHEBI:57692"/>
    </ligand>
</feature>
<feature type="binding site" evidence="1">
    <location>
        <position position="308"/>
    </location>
    <ligand>
        <name>substrate</name>
    </ligand>
</feature>
<feature type="binding site" evidence="2 5">
    <location>
        <position position="309"/>
    </location>
    <ligand>
        <name>FAD</name>
        <dbReference type="ChEBI" id="CHEBI:57692"/>
    </ligand>
</feature>
<feature type="strand" evidence="6">
    <location>
        <begin position="5"/>
        <end position="8"/>
    </location>
</feature>
<feature type="helix" evidence="6">
    <location>
        <begin position="12"/>
        <end position="23"/>
    </location>
</feature>
<feature type="strand" evidence="6">
    <location>
        <begin position="28"/>
        <end position="31"/>
    </location>
</feature>
<feature type="strand" evidence="6">
    <location>
        <begin position="33"/>
        <end position="37"/>
    </location>
</feature>
<feature type="helix" evidence="6">
    <location>
        <begin position="39"/>
        <end position="41"/>
    </location>
</feature>
<feature type="strand" evidence="6">
    <location>
        <begin position="43"/>
        <end position="46"/>
    </location>
</feature>
<feature type="strand" evidence="6">
    <location>
        <begin position="49"/>
        <end position="52"/>
    </location>
</feature>
<feature type="helix" evidence="6">
    <location>
        <begin position="63"/>
        <end position="75"/>
    </location>
</feature>
<feature type="strand" evidence="6">
    <location>
        <begin position="77"/>
        <end position="81"/>
    </location>
</feature>
<feature type="strand" evidence="6">
    <location>
        <begin position="85"/>
        <end position="92"/>
    </location>
</feature>
<feature type="strand" evidence="6">
    <location>
        <begin position="102"/>
        <end position="108"/>
    </location>
</feature>
<feature type="helix" evidence="6">
    <location>
        <begin position="111"/>
        <end position="117"/>
    </location>
</feature>
<feature type="strand" evidence="6">
    <location>
        <begin position="128"/>
        <end position="133"/>
    </location>
</feature>
<feature type="strand" evidence="6">
    <location>
        <begin position="138"/>
        <end position="142"/>
    </location>
</feature>
<feature type="strand" evidence="6">
    <location>
        <begin position="147"/>
        <end position="152"/>
    </location>
</feature>
<feature type="strand" evidence="6">
    <location>
        <begin position="154"/>
        <end position="156"/>
    </location>
</feature>
<feature type="helix" evidence="6">
    <location>
        <begin position="160"/>
        <end position="163"/>
    </location>
</feature>
<feature type="helix" evidence="6">
    <location>
        <begin position="164"/>
        <end position="167"/>
    </location>
</feature>
<feature type="helix" evidence="6">
    <location>
        <begin position="171"/>
        <end position="177"/>
    </location>
</feature>
<feature type="strand" evidence="6">
    <location>
        <begin position="182"/>
        <end position="194"/>
    </location>
</feature>
<feature type="strand" evidence="6">
    <location>
        <begin position="202"/>
        <end position="205"/>
    </location>
</feature>
<feature type="strand" evidence="6">
    <location>
        <begin position="207"/>
        <end position="215"/>
    </location>
</feature>
<feature type="helix" evidence="6">
    <location>
        <begin position="216"/>
        <end position="218"/>
    </location>
</feature>
<feature type="strand" evidence="6">
    <location>
        <begin position="225"/>
        <end position="233"/>
    </location>
</feature>
<feature type="helix" evidence="6">
    <location>
        <begin position="235"/>
        <end position="240"/>
    </location>
</feature>
<feature type="turn" evidence="6">
    <location>
        <begin position="241"/>
        <end position="243"/>
    </location>
</feature>
<feature type="helix" evidence="6">
    <location>
        <begin position="246"/>
        <end position="258"/>
    </location>
</feature>
<feature type="strand" evidence="6">
    <location>
        <begin position="269"/>
        <end position="283"/>
    </location>
</feature>
<feature type="strand" evidence="6">
    <location>
        <begin position="288"/>
        <end position="292"/>
    </location>
</feature>
<feature type="turn" evidence="6">
    <location>
        <begin position="293"/>
        <end position="296"/>
    </location>
</feature>
<feature type="strand" evidence="6">
    <location>
        <begin position="297"/>
        <end position="299"/>
    </location>
</feature>
<feature type="helix" evidence="6">
    <location>
        <begin position="302"/>
        <end position="304"/>
    </location>
</feature>
<feature type="helix" evidence="6">
    <location>
        <begin position="309"/>
        <end position="326"/>
    </location>
</feature>